<proteinExistence type="evidence at protein level"/>
<gene>
    <name type="ordered locus">TM_1570</name>
</gene>
<evidence type="ECO:0000305" key="1"/>
<evidence type="ECO:0007829" key="2">
    <source>
        <dbReference type="PDB" id="3DCM"/>
    </source>
</evidence>
<sequence length="192" mass="21978">MLEKVYVALIHYPIKGKDGSIISTAVTNLDVHDIARTARTYNLKGYYIVTNLRAQQDMVSKMLKFWREGFGSRYNPSRAESLKLVKLKSYLEDVLEDIESVEGERPLIFFTSAKKRENDISFEEGRRIIIETEKPVLILLGTGWGLPDEILEISDYVLEPIRAQSDFNHLSVRAAAAIIIDRLIGENYARRD</sequence>
<protein>
    <recommendedName>
        <fullName>Uncharacterized protein TM_1570</fullName>
    </recommendedName>
</protein>
<organism>
    <name type="scientific">Thermotoga maritima (strain ATCC 43589 / DSM 3109 / JCM 10099 / NBRC 100826 / MSB8)</name>
    <dbReference type="NCBI Taxonomy" id="243274"/>
    <lineage>
        <taxon>Bacteria</taxon>
        <taxon>Thermotogati</taxon>
        <taxon>Thermotogota</taxon>
        <taxon>Thermotogae</taxon>
        <taxon>Thermotogales</taxon>
        <taxon>Thermotogaceae</taxon>
        <taxon>Thermotoga</taxon>
    </lineage>
</organism>
<accession>Q9X1Q6</accession>
<comment type="similarity">
    <text evidence="1">To A.aeolicus AQ_054.</text>
</comment>
<feature type="chain" id="PRO_0000186836" description="Uncharacterized protein TM_1570">
    <location>
        <begin position="1"/>
        <end position="192"/>
    </location>
</feature>
<feature type="strand" evidence="2">
    <location>
        <begin position="4"/>
        <end position="10"/>
    </location>
</feature>
<feature type="strand" evidence="2">
    <location>
        <begin position="12"/>
        <end position="15"/>
    </location>
</feature>
<feature type="strand" evidence="2">
    <location>
        <begin position="20"/>
        <end position="22"/>
    </location>
</feature>
<feature type="helix" evidence="2">
    <location>
        <begin position="28"/>
        <end position="40"/>
    </location>
</feature>
<feature type="strand" evidence="2">
    <location>
        <begin position="44"/>
        <end position="49"/>
    </location>
</feature>
<feature type="helix" evidence="2">
    <location>
        <begin position="53"/>
        <end position="67"/>
    </location>
</feature>
<feature type="helix" evidence="2">
    <location>
        <begin position="70"/>
        <end position="73"/>
    </location>
</feature>
<feature type="strand" evidence="2">
    <location>
        <begin position="76"/>
        <end position="78"/>
    </location>
</feature>
<feature type="helix" evidence="2">
    <location>
        <begin position="79"/>
        <end position="82"/>
    </location>
</feature>
<feature type="strand" evidence="2">
    <location>
        <begin position="85"/>
        <end position="90"/>
    </location>
</feature>
<feature type="helix" evidence="2">
    <location>
        <begin position="91"/>
        <end position="102"/>
    </location>
</feature>
<feature type="strand" evidence="2">
    <location>
        <begin position="107"/>
        <end position="110"/>
    </location>
</feature>
<feature type="helix" evidence="2">
    <location>
        <begin position="122"/>
        <end position="131"/>
    </location>
</feature>
<feature type="strand" evidence="2">
    <location>
        <begin position="136"/>
        <end position="140"/>
    </location>
</feature>
<feature type="helix" evidence="2">
    <location>
        <begin position="148"/>
        <end position="151"/>
    </location>
</feature>
<feature type="strand" evidence="2">
    <location>
        <begin position="155"/>
        <end position="158"/>
    </location>
</feature>
<feature type="turn" evidence="2">
    <location>
        <begin position="161"/>
        <end position="164"/>
    </location>
</feature>
<feature type="helix" evidence="2">
    <location>
        <begin position="172"/>
        <end position="183"/>
    </location>
</feature>
<feature type="turn" evidence="2">
    <location>
        <begin position="184"/>
        <end position="186"/>
    </location>
</feature>
<name>Y1570_THEMA</name>
<keyword id="KW-0002">3D-structure</keyword>
<keyword id="KW-1185">Reference proteome</keyword>
<reference key="1">
    <citation type="journal article" date="1999" name="Nature">
        <title>Evidence for lateral gene transfer between Archaea and Bacteria from genome sequence of Thermotoga maritima.</title>
        <authorList>
            <person name="Nelson K.E."/>
            <person name="Clayton R.A."/>
            <person name="Gill S.R."/>
            <person name="Gwinn M.L."/>
            <person name="Dodson R.J."/>
            <person name="Haft D.H."/>
            <person name="Hickey E.K."/>
            <person name="Peterson J.D."/>
            <person name="Nelson W.C."/>
            <person name="Ketchum K.A."/>
            <person name="McDonald L.A."/>
            <person name="Utterback T.R."/>
            <person name="Malek J.A."/>
            <person name="Linher K.D."/>
            <person name="Garrett M.M."/>
            <person name="Stewart A.M."/>
            <person name="Cotton M.D."/>
            <person name="Pratt M.S."/>
            <person name="Phillips C.A."/>
            <person name="Richardson D.L."/>
            <person name="Heidelberg J.F."/>
            <person name="Sutton G.G."/>
            <person name="Fleischmann R.D."/>
            <person name="Eisen J.A."/>
            <person name="White O."/>
            <person name="Salzberg S.L."/>
            <person name="Smith H.O."/>
            <person name="Venter J.C."/>
            <person name="Fraser C.M."/>
        </authorList>
    </citation>
    <scope>NUCLEOTIDE SEQUENCE [LARGE SCALE GENOMIC DNA]</scope>
    <source>
        <strain>ATCC 43589 / DSM 3109 / JCM 10099 / NBRC 100826 / MSB8</strain>
    </source>
</reference>
<dbReference type="EMBL" id="AE000512">
    <property type="protein sequence ID" value="AAD36637.1"/>
    <property type="molecule type" value="Genomic_DNA"/>
</dbReference>
<dbReference type="PIR" id="C72237">
    <property type="entry name" value="C72237"/>
</dbReference>
<dbReference type="RefSeq" id="NP_229370.1">
    <property type="nucleotide sequence ID" value="NC_000853.1"/>
</dbReference>
<dbReference type="RefSeq" id="WP_004081987.1">
    <property type="nucleotide sequence ID" value="NZ_CP011107.1"/>
</dbReference>
<dbReference type="PDB" id="3DCM">
    <property type="method" value="X-ray"/>
    <property type="resolution" value="2.00 A"/>
    <property type="chains" value="X=1-192"/>
</dbReference>
<dbReference type="PDBsum" id="3DCM"/>
<dbReference type="SMR" id="Q9X1Q6"/>
<dbReference type="STRING" id="243274.TM_1570"/>
<dbReference type="PaxDb" id="243274-THEMA_06430"/>
<dbReference type="EnsemblBacteria" id="AAD36637">
    <property type="protein sequence ID" value="AAD36637"/>
    <property type="gene ID" value="TM_1570"/>
</dbReference>
<dbReference type="KEGG" id="tma:TM1570"/>
<dbReference type="KEGG" id="tmi:THEMA_06430"/>
<dbReference type="KEGG" id="tmm:Tmari_1578"/>
<dbReference type="KEGG" id="tmw:THMA_1605"/>
<dbReference type="eggNOG" id="COG4752">
    <property type="taxonomic scope" value="Bacteria"/>
</dbReference>
<dbReference type="InParanoid" id="Q9X1Q6"/>
<dbReference type="OrthoDB" id="9794931at2"/>
<dbReference type="EvolutionaryTrace" id="Q9X1Q6"/>
<dbReference type="Proteomes" id="UP000008183">
    <property type="component" value="Chromosome"/>
</dbReference>
<dbReference type="CDD" id="cd18085">
    <property type="entry name" value="TM1570-like"/>
    <property type="match status" value="1"/>
</dbReference>
<dbReference type="Gene3D" id="3.40.1280.10">
    <property type="match status" value="1"/>
</dbReference>
<dbReference type="InterPro" id="IPR029028">
    <property type="entry name" value="Alpha/beta_knot_MTases"/>
</dbReference>
<dbReference type="InterPro" id="IPR019230">
    <property type="entry name" value="RNA_MeTrfase_C_dom"/>
</dbReference>
<dbReference type="InterPro" id="IPR029026">
    <property type="entry name" value="tRNA_m1G_MTases_N"/>
</dbReference>
<dbReference type="Pfam" id="PF09936">
    <property type="entry name" value="Methyltrn_RNA_4"/>
    <property type="match status" value="1"/>
</dbReference>
<dbReference type="SUPFAM" id="SSF75217">
    <property type="entry name" value="alpha/beta knot"/>
    <property type="match status" value="1"/>
</dbReference>